<sequence length="227" mass="24930">MAAEIILRLERIGRAYKEADRELIILNDADFTLRRGEMVALVAPSGAGKSTLLHTAGLLERPDSGDVVLDGRSCSKLSDDERTAVRRNDVGFVYQFHHLLPEFSALENVMLPQMIRGLSRKAAAERAQQLLEYMKIGKRASHRPAELSGGEQQRVAIARAVANAPLVLLADEPTGNLDPTTSSYVFGALEALVRQSGLAALIATHNHELARRMDRRVTLKDGRVVDL</sequence>
<reference key="1">
    <citation type="journal article" date="2002" name="Proc. Natl. Acad. Sci. U.S.A.">
        <title>The Brucella suis genome reveals fundamental similarities between animal and plant pathogens and symbionts.</title>
        <authorList>
            <person name="Paulsen I.T."/>
            <person name="Seshadri R."/>
            <person name="Nelson K.E."/>
            <person name="Eisen J.A."/>
            <person name="Heidelberg J.F."/>
            <person name="Read T.D."/>
            <person name="Dodson R.J."/>
            <person name="Umayam L.A."/>
            <person name="Brinkac L.M."/>
            <person name="Beanan M.J."/>
            <person name="Daugherty S.C."/>
            <person name="DeBoy R.T."/>
            <person name="Durkin A.S."/>
            <person name="Kolonay J.F."/>
            <person name="Madupu R."/>
            <person name="Nelson W.C."/>
            <person name="Ayodeji B."/>
            <person name="Kraul M."/>
            <person name="Shetty J."/>
            <person name="Malek J.A."/>
            <person name="Van Aken S.E."/>
            <person name="Riedmuller S."/>
            <person name="Tettelin H."/>
            <person name="Gill S.R."/>
            <person name="White O."/>
            <person name="Salzberg S.L."/>
            <person name="Hoover D.L."/>
            <person name="Lindler L.E."/>
            <person name="Halling S.M."/>
            <person name="Boyle S.M."/>
            <person name="Fraser C.M."/>
        </authorList>
    </citation>
    <scope>NUCLEOTIDE SEQUENCE [LARGE SCALE GENOMIC DNA]</scope>
    <source>
        <strain>1330</strain>
    </source>
</reference>
<reference key="2">
    <citation type="journal article" date="2011" name="J. Bacteriol.">
        <title>Revised genome sequence of Brucella suis 1330.</title>
        <authorList>
            <person name="Tae H."/>
            <person name="Shallom S."/>
            <person name="Settlage R."/>
            <person name="Preston D."/>
            <person name="Adams L.G."/>
            <person name="Garner H.R."/>
        </authorList>
    </citation>
    <scope>NUCLEOTIDE SEQUENCE [LARGE SCALE GENOMIC DNA]</scope>
    <source>
        <strain>1330</strain>
    </source>
</reference>
<protein>
    <recommendedName>
        <fullName evidence="1">Lipoprotein-releasing system ATP-binding protein LolD</fullName>
        <ecNumber evidence="1">7.6.2.-</ecNumber>
    </recommendedName>
</protein>
<keyword id="KW-0067">ATP-binding</keyword>
<keyword id="KW-0997">Cell inner membrane</keyword>
<keyword id="KW-1003">Cell membrane</keyword>
<keyword id="KW-0472">Membrane</keyword>
<keyword id="KW-0547">Nucleotide-binding</keyword>
<keyword id="KW-1278">Translocase</keyword>
<keyword id="KW-0813">Transport</keyword>
<dbReference type="EC" id="7.6.2.-" evidence="1"/>
<dbReference type="EMBL" id="AE014291">
    <property type="protein sequence ID" value="AAN29753.1"/>
    <property type="molecule type" value="Genomic_DNA"/>
</dbReference>
<dbReference type="EMBL" id="CP002997">
    <property type="protein sequence ID" value="AEM18170.1"/>
    <property type="molecule type" value="Genomic_DNA"/>
</dbReference>
<dbReference type="RefSeq" id="WP_002963957.1">
    <property type="nucleotide sequence ID" value="NZ_KN046804.1"/>
</dbReference>
<dbReference type="SMR" id="Q8G195"/>
<dbReference type="KEGG" id="bms:BR0824"/>
<dbReference type="KEGG" id="bsi:BS1330_I0820"/>
<dbReference type="PATRIC" id="fig|204722.22.peg.1027"/>
<dbReference type="HOGENOM" id="CLU_000604_1_22_5"/>
<dbReference type="PhylomeDB" id="Q8G195"/>
<dbReference type="Proteomes" id="UP000007104">
    <property type="component" value="Chromosome I"/>
</dbReference>
<dbReference type="GO" id="GO:0005886">
    <property type="term" value="C:plasma membrane"/>
    <property type="evidence" value="ECO:0007669"/>
    <property type="project" value="UniProtKB-SubCell"/>
</dbReference>
<dbReference type="GO" id="GO:0005524">
    <property type="term" value="F:ATP binding"/>
    <property type="evidence" value="ECO:0007669"/>
    <property type="project" value="UniProtKB-KW"/>
</dbReference>
<dbReference type="GO" id="GO:0016887">
    <property type="term" value="F:ATP hydrolysis activity"/>
    <property type="evidence" value="ECO:0007669"/>
    <property type="project" value="InterPro"/>
</dbReference>
<dbReference type="GO" id="GO:0022857">
    <property type="term" value="F:transmembrane transporter activity"/>
    <property type="evidence" value="ECO:0007669"/>
    <property type="project" value="TreeGrafter"/>
</dbReference>
<dbReference type="GO" id="GO:0044874">
    <property type="term" value="P:lipoprotein localization to outer membrane"/>
    <property type="evidence" value="ECO:0007669"/>
    <property type="project" value="TreeGrafter"/>
</dbReference>
<dbReference type="GO" id="GO:0089705">
    <property type="term" value="P:protein localization to outer membrane"/>
    <property type="evidence" value="ECO:0007669"/>
    <property type="project" value="TreeGrafter"/>
</dbReference>
<dbReference type="CDD" id="cd03255">
    <property type="entry name" value="ABC_MJ0796_LolCDE_FtsE"/>
    <property type="match status" value="1"/>
</dbReference>
<dbReference type="FunFam" id="3.40.50.300:FF:000032">
    <property type="entry name" value="Export ABC transporter ATP-binding protein"/>
    <property type="match status" value="1"/>
</dbReference>
<dbReference type="Gene3D" id="3.40.50.300">
    <property type="entry name" value="P-loop containing nucleotide triphosphate hydrolases"/>
    <property type="match status" value="1"/>
</dbReference>
<dbReference type="InterPro" id="IPR003593">
    <property type="entry name" value="AAA+_ATPase"/>
</dbReference>
<dbReference type="InterPro" id="IPR003439">
    <property type="entry name" value="ABC_transporter-like_ATP-bd"/>
</dbReference>
<dbReference type="InterPro" id="IPR017871">
    <property type="entry name" value="ABC_transporter-like_CS"/>
</dbReference>
<dbReference type="InterPro" id="IPR015854">
    <property type="entry name" value="ABC_transpr_LolD-like"/>
</dbReference>
<dbReference type="InterPro" id="IPR017911">
    <property type="entry name" value="MacB-like_ATP-bd"/>
</dbReference>
<dbReference type="InterPro" id="IPR027417">
    <property type="entry name" value="P-loop_NTPase"/>
</dbReference>
<dbReference type="PANTHER" id="PTHR24220">
    <property type="entry name" value="IMPORT ATP-BINDING PROTEIN"/>
    <property type="match status" value="1"/>
</dbReference>
<dbReference type="PANTHER" id="PTHR24220:SF689">
    <property type="entry name" value="LIPOPROTEIN-RELEASING SYSTEM ATP-BINDING PROTEIN LOLD"/>
    <property type="match status" value="1"/>
</dbReference>
<dbReference type="Pfam" id="PF00005">
    <property type="entry name" value="ABC_tran"/>
    <property type="match status" value="1"/>
</dbReference>
<dbReference type="SMART" id="SM00382">
    <property type="entry name" value="AAA"/>
    <property type="match status" value="1"/>
</dbReference>
<dbReference type="SUPFAM" id="SSF52540">
    <property type="entry name" value="P-loop containing nucleoside triphosphate hydrolases"/>
    <property type="match status" value="1"/>
</dbReference>
<dbReference type="PROSITE" id="PS00211">
    <property type="entry name" value="ABC_TRANSPORTER_1"/>
    <property type="match status" value="1"/>
</dbReference>
<dbReference type="PROSITE" id="PS50893">
    <property type="entry name" value="ABC_TRANSPORTER_2"/>
    <property type="match status" value="1"/>
</dbReference>
<dbReference type="PROSITE" id="PS51244">
    <property type="entry name" value="LOLD"/>
    <property type="match status" value="1"/>
</dbReference>
<accession>Q8G195</accession>
<accession>G0K8X2</accession>
<comment type="function">
    <text evidence="1">Part of the ABC transporter complex LolCDE involved in the translocation of mature outer membrane-directed lipoproteins, from the inner membrane to the periplasmic chaperone, LolA. Responsible for the formation of the LolA-lipoprotein complex in an ATP-dependent manner.</text>
</comment>
<comment type="subunit">
    <text evidence="1">The complex is composed of two ATP-binding proteins (LolD) and two transmembrane proteins (LolC and LolE).</text>
</comment>
<comment type="subcellular location">
    <subcellularLocation>
        <location evidence="1">Cell inner membrane</location>
        <topology evidence="1">Peripheral membrane protein</topology>
    </subcellularLocation>
</comment>
<comment type="similarity">
    <text evidence="1">Belongs to the ABC transporter superfamily. Lipoprotein translocase (TC 3.A.1.125) family.</text>
</comment>
<proteinExistence type="inferred from homology"/>
<evidence type="ECO:0000255" key="1">
    <source>
        <dbReference type="HAMAP-Rule" id="MF_01708"/>
    </source>
</evidence>
<gene>
    <name evidence="1" type="primary">lolD</name>
    <name type="ordered locus">BR0824</name>
    <name type="ordered locus">BS1330_I0820</name>
</gene>
<organism>
    <name type="scientific">Brucella suis biovar 1 (strain 1330)</name>
    <dbReference type="NCBI Taxonomy" id="204722"/>
    <lineage>
        <taxon>Bacteria</taxon>
        <taxon>Pseudomonadati</taxon>
        <taxon>Pseudomonadota</taxon>
        <taxon>Alphaproteobacteria</taxon>
        <taxon>Hyphomicrobiales</taxon>
        <taxon>Brucellaceae</taxon>
        <taxon>Brucella/Ochrobactrum group</taxon>
        <taxon>Brucella</taxon>
    </lineage>
</organism>
<feature type="chain" id="PRO_0000092424" description="Lipoprotein-releasing system ATP-binding protein LolD">
    <location>
        <begin position="1"/>
        <end position="227"/>
    </location>
</feature>
<feature type="domain" description="ABC transporter" evidence="1">
    <location>
        <begin position="7"/>
        <end position="227"/>
    </location>
</feature>
<feature type="binding site" evidence="1">
    <location>
        <begin position="43"/>
        <end position="50"/>
    </location>
    <ligand>
        <name>ATP</name>
        <dbReference type="ChEBI" id="CHEBI:30616"/>
    </ligand>
</feature>
<name>LOLD_BRUSU</name>